<gene>
    <name type="primary">Uxs1</name>
</gene>
<name>UXS1_MOUSE</name>
<organism>
    <name type="scientific">Mus musculus</name>
    <name type="common">Mouse</name>
    <dbReference type="NCBI Taxonomy" id="10090"/>
    <lineage>
        <taxon>Eukaryota</taxon>
        <taxon>Metazoa</taxon>
        <taxon>Chordata</taxon>
        <taxon>Craniata</taxon>
        <taxon>Vertebrata</taxon>
        <taxon>Euteleostomi</taxon>
        <taxon>Mammalia</taxon>
        <taxon>Eutheria</taxon>
        <taxon>Euarchontoglires</taxon>
        <taxon>Glires</taxon>
        <taxon>Rodentia</taxon>
        <taxon>Myomorpha</taxon>
        <taxon>Muroidea</taxon>
        <taxon>Muridae</taxon>
        <taxon>Murinae</taxon>
        <taxon>Mus</taxon>
        <taxon>Mus</taxon>
    </lineage>
</organism>
<comment type="function">
    <text evidence="2">Catalyzes the NAD-dependent decarboxylation of UDP-glucuronic acid to UDP-xylose. Necessary for the biosynthesis of the core tetrasaccharide in glycosaminoglycan biosynthesis.</text>
</comment>
<comment type="catalytic activity">
    <reaction evidence="2">
        <text>UDP-alpha-D-glucuronate + H(+) = UDP-alpha-D-xylose + CO2</text>
        <dbReference type="Rhea" id="RHEA:23916"/>
        <dbReference type="ChEBI" id="CHEBI:15378"/>
        <dbReference type="ChEBI" id="CHEBI:16526"/>
        <dbReference type="ChEBI" id="CHEBI:57632"/>
        <dbReference type="ChEBI" id="CHEBI:58052"/>
        <dbReference type="EC" id="4.1.1.35"/>
    </reaction>
    <physiologicalReaction direction="left-to-right" evidence="2">
        <dbReference type="Rhea" id="RHEA:23917"/>
    </physiologicalReaction>
</comment>
<comment type="cofactor">
    <cofactor evidence="2">
        <name>NAD(+)</name>
        <dbReference type="ChEBI" id="CHEBI:57540"/>
    </cofactor>
</comment>
<comment type="pathway">
    <text evidence="2">Nucleotide-sugar biosynthesis; UDP-alpha-D-xylose biosynthesis; UDP-alpha-D-xylose from UDP-alpha-D-glucuronate: step 1/1.</text>
</comment>
<comment type="subunit">
    <text evidence="1 2">Homodimer and homotetramer (By similarity). Interacts with AKT1 (By similarity).</text>
</comment>
<comment type="subcellular location">
    <subcellularLocation>
        <location evidence="1">Golgi apparatus</location>
        <location evidence="1">Golgi stack membrane</location>
        <topology evidence="2">Single-pass type II membrane protein</topology>
    </subcellularLocation>
</comment>
<comment type="similarity">
    <text evidence="4">Belongs to the NAD(P)-dependent epimerase/dehydratase family. UDP-glucuronic acid decarboxylase subfamily.</text>
</comment>
<proteinExistence type="evidence at protein level"/>
<feature type="chain" id="PRO_0000183270" description="UDP-glucuronic acid decarboxylase 1">
    <location>
        <begin position="1"/>
        <end position="420"/>
    </location>
</feature>
<feature type="topological domain" description="Cytoplasmic" evidence="3">
    <location>
        <begin position="1"/>
        <end position="19"/>
    </location>
</feature>
<feature type="transmembrane region" description="Helical; Signal-anchor for type II membrane protein" evidence="3">
    <location>
        <begin position="20"/>
        <end position="40"/>
    </location>
</feature>
<feature type="topological domain" description="Lumenal" evidence="3">
    <location>
        <begin position="41"/>
        <end position="420"/>
    </location>
</feature>
<feature type="active site" description="Proton acceptor" evidence="2">
    <location>
        <position position="231"/>
    </location>
</feature>
<feature type="binding site" evidence="2">
    <location>
        <position position="98"/>
    </location>
    <ligand>
        <name>NAD(+)</name>
        <dbReference type="ChEBI" id="CHEBI:57540"/>
    </ligand>
</feature>
<feature type="binding site" evidence="2">
    <location>
        <position position="99"/>
    </location>
    <ligand>
        <name>NAD(+)</name>
        <dbReference type="ChEBI" id="CHEBI:57540"/>
    </ligand>
</feature>
<feature type="binding site" evidence="2">
    <location>
        <position position="100"/>
    </location>
    <ligand>
        <name>NAD(+)</name>
        <dbReference type="ChEBI" id="CHEBI:57540"/>
    </ligand>
</feature>
<feature type="binding site" evidence="2">
    <location>
        <position position="119"/>
    </location>
    <ligand>
        <name>NAD(+)</name>
        <dbReference type="ChEBI" id="CHEBI:57540"/>
    </ligand>
</feature>
<feature type="binding site" evidence="2">
    <location>
        <position position="120"/>
    </location>
    <ligand>
        <name>NAD(+)</name>
        <dbReference type="ChEBI" id="CHEBI:57540"/>
    </ligand>
</feature>
<feature type="binding site" evidence="2">
    <location>
        <position position="122"/>
    </location>
    <ligand>
        <name>NAD(+)</name>
        <dbReference type="ChEBI" id="CHEBI:57540"/>
    </ligand>
</feature>
<feature type="binding site" evidence="2">
    <location>
        <position position="123"/>
    </location>
    <ligand>
        <name>NAD(+)</name>
        <dbReference type="ChEBI" id="CHEBI:57540"/>
    </ligand>
</feature>
<feature type="binding site" evidence="2">
    <location>
        <position position="124"/>
    </location>
    <ligand>
        <name>NAD(+)</name>
        <dbReference type="ChEBI" id="CHEBI:57540"/>
    </ligand>
</feature>
<feature type="binding site" evidence="2">
    <location>
        <position position="144"/>
    </location>
    <ligand>
        <name>NAD(+)</name>
        <dbReference type="ChEBI" id="CHEBI:57540"/>
    </ligand>
</feature>
<feature type="binding site" evidence="2">
    <location>
        <position position="145"/>
    </location>
    <ligand>
        <name>NAD(+)</name>
        <dbReference type="ChEBI" id="CHEBI:57540"/>
    </ligand>
</feature>
<feature type="binding site" evidence="2">
    <location>
        <position position="149"/>
    </location>
    <ligand>
        <name>UDP-alpha-D-glucuronate</name>
        <dbReference type="ChEBI" id="CHEBI:58052"/>
    </ligand>
</feature>
<feature type="binding site" evidence="2">
    <location>
        <position position="150"/>
    </location>
    <ligand>
        <name>UDP-alpha-D-glucuronate</name>
        <dbReference type="ChEBI" id="CHEBI:58052"/>
    </ligand>
</feature>
<feature type="binding site" evidence="2">
    <location>
        <position position="159"/>
    </location>
    <ligand>
        <name>NAD(+)</name>
        <dbReference type="ChEBI" id="CHEBI:57540"/>
    </ligand>
</feature>
<feature type="binding site" evidence="2">
    <location>
        <position position="161"/>
    </location>
    <ligand>
        <name>NAD(+)</name>
        <dbReference type="ChEBI" id="CHEBI:57540"/>
    </ligand>
</feature>
<feature type="binding site" evidence="2">
    <location>
        <position position="177"/>
    </location>
    <ligand>
        <name>UDP-alpha-D-glucuronate</name>
        <dbReference type="ChEBI" id="CHEBI:58052"/>
    </ligand>
</feature>
<feature type="binding site" evidence="2">
    <location>
        <position position="178"/>
    </location>
    <ligand>
        <name>NAD(+)</name>
        <dbReference type="ChEBI" id="CHEBI:57540"/>
    </ligand>
</feature>
<feature type="binding site" evidence="2">
    <location>
        <position position="185"/>
    </location>
    <ligand>
        <name>UDP-alpha-D-glucuronate</name>
        <dbReference type="ChEBI" id="CHEBI:58052"/>
    </ligand>
</feature>
<feature type="binding site" evidence="2">
    <location>
        <position position="188"/>
    </location>
    <ligand>
        <name>UDP-alpha-D-glucuronate</name>
        <dbReference type="ChEBI" id="CHEBI:58052"/>
    </ligand>
</feature>
<feature type="binding site" evidence="2">
    <location>
        <position position="191"/>
    </location>
    <ligand>
        <name>UDP-alpha-D-glucuronate</name>
        <dbReference type="ChEBI" id="CHEBI:58052"/>
    </ligand>
</feature>
<feature type="binding site" evidence="2">
    <location>
        <position position="192"/>
    </location>
    <ligand>
        <name>UDP-alpha-D-glucuronate</name>
        <dbReference type="ChEBI" id="CHEBI:58052"/>
    </ligand>
</feature>
<feature type="binding site" evidence="2">
    <location>
        <position position="200"/>
    </location>
    <ligand>
        <name>NAD(+)</name>
        <dbReference type="ChEBI" id="CHEBI:57540"/>
    </ligand>
</feature>
<feature type="binding site" evidence="2">
    <location>
        <position position="231"/>
    </location>
    <ligand>
        <name>NAD(+)</name>
        <dbReference type="ChEBI" id="CHEBI:57540"/>
    </ligand>
</feature>
<feature type="binding site" evidence="2">
    <location>
        <position position="235"/>
    </location>
    <ligand>
        <name>NAD(+)</name>
        <dbReference type="ChEBI" id="CHEBI:57540"/>
    </ligand>
</feature>
<feature type="binding site" evidence="2">
    <location>
        <position position="245"/>
    </location>
    <ligand>
        <name>UDP-alpha-D-glucuronate</name>
        <dbReference type="ChEBI" id="CHEBI:58052"/>
    </ligand>
</feature>
<feature type="binding site" evidence="2">
    <location>
        <position position="248"/>
    </location>
    <ligand>
        <name>UDP-alpha-D-glucuronate</name>
        <dbReference type="ChEBI" id="CHEBI:58052"/>
    </ligand>
</feature>
<feature type="binding site" evidence="2">
    <location>
        <position position="249"/>
    </location>
    <ligand>
        <name>UDP-alpha-D-glucuronate</name>
        <dbReference type="ChEBI" id="CHEBI:58052"/>
    </ligand>
</feature>
<feature type="binding site" evidence="2">
    <location>
        <position position="261"/>
    </location>
    <ligand>
        <name>NAD(+)</name>
        <dbReference type="ChEBI" id="CHEBI:57540"/>
    </ligand>
</feature>
<feature type="binding site" evidence="2">
    <location>
        <position position="267"/>
    </location>
    <ligand>
        <name>NAD(+)</name>
        <dbReference type="ChEBI" id="CHEBI:57540"/>
    </ligand>
</feature>
<feature type="binding site" evidence="2">
    <location>
        <position position="272"/>
    </location>
    <ligand>
        <name>NAD(+)</name>
        <dbReference type="ChEBI" id="CHEBI:57540"/>
    </ligand>
</feature>
<feature type="modified residue" description="N-acetylmethionine" evidence="2">
    <location>
        <position position="1"/>
    </location>
</feature>
<feature type="modified residue" description="Phosphothreonine" evidence="2">
    <location>
        <position position="94"/>
    </location>
</feature>
<feature type="glycosylation site" description="N-linked (GlcNAc...) asparagine" evidence="3">
    <location>
        <position position="316"/>
    </location>
</feature>
<feature type="sequence conflict" description="In Ref. 2; BAE31165." evidence="4" ref="2">
    <original>R</original>
    <variation>G</variation>
    <location>
        <position position="257"/>
    </location>
</feature>
<dbReference type="EC" id="4.1.1.35" evidence="2"/>
<dbReference type="EMBL" id="AF399958">
    <property type="protein sequence ID" value="AAK85410.1"/>
    <property type="molecule type" value="mRNA"/>
</dbReference>
<dbReference type="EMBL" id="AK075806">
    <property type="protein sequence ID" value="BAC35974.1"/>
    <property type="molecule type" value="mRNA"/>
</dbReference>
<dbReference type="EMBL" id="AK152376">
    <property type="protein sequence ID" value="BAE31165.1"/>
    <property type="molecule type" value="mRNA"/>
</dbReference>
<dbReference type="EMBL" id="BC037049">
    <property type="protein sequence ID" value="AAH37049.1"/>
    <property type="molecule type" value="mRNA"/>
</dbReference>
<dbReference type="CCDS" id="CCDS35551.1"/>
<dbReference type="RefSeq" id="NP_080706.1">
    <property type="nucleotide sequence ID" value="NM_026430.4"/>
</dbReference>
<dbReference type="SMR" id="Q91XL3"/>
<dbReference type="BioGRID" id="212507">
    <property type="interactions" value="3"/>
</dbReference>
<dbReference type="FunCoup" id="Q91XL3">
    <property type="interactions" value="2495"/>
</dbReference>
<dbReference type="STRING" id="10090.ENSMUSP00000119939"/>
<dbReference type="GlyCosmos" id="Q91XL3">
    <property type="glycosylation" value="1 site, No reported glycans"/>
</dbReference>
<dbReference type="GlyGen" id="Q91XL3">
    <property type="glycosylation" value="2 sites, 1 O-linked glycan (1 site)"/>
</dbReference>
<dbReference type="iPTMnet" id="Q91XL3"/>
<dbReference type="PhosphoSitePlus" id="Q91XL3"/>
<dbReference type="jPOST" id="Q91XL3"/>
<dbReference type="PaxDb" id="10090-ENSMUSP00000119939"/>
<dbReference type="PeptideAtlas" id="Q91XL3"/>
<dbReference type="ProteomicsDB" id="300206"/>
<dbReference type="Pumba" id="Q91XL3"/>
<dbReference type="Antibodypedia" id="1921">
    <property type="antibodies" value="121 antibodies from 18 providers"/>
</dbReference>
<dbReference type="DNASU" id="67883"/>
<dbReference type="Ensembl" id="ENSMUST00000126008.8">
    <property type="protein sequence ID" value="ENSMUSP00000119939.2"/>
    <property type="gene ID" value="ENSMUSG00000057363.13"/>
</dbReference>
<dbReference type="GeneID" id="67883"/>
<dbReference type="KEGG" id="mmu:67883"/>
<dbReference type="UCSC" id="uc007avq.1">
    <property type="organism name" value="mouse"/>
</dbReference>
<dbReference type="AGR" id="MGI:1915133"/>
<dbReference type="CTD" id="80146"/>
<dbReference type="MGI" id="MGI:1915133">
    <property type="gene designation" value="Uxs1"/>
</dbReference>
<dbReference type="VEuPathDB" id="HostDB:ENSMUSG00000057363"/>
<dbReference type="eggNOG" id="KOG1429">
    <property type="taxonomic scope" value="Eukaryota"/>
</dbReference>
<dbReference type="GeneTree" id="ENSGT00940000157868"/>
<dbReference type="HOGENOM" id="CLU_007383_4_3_1"/>
<dbReference type="InParanoid" id="Q91XL3"/>
<dbReference type="OMA" id="KYPKVKY"/>
<dbReference type="OrthoDB" id="331544at2759"/>
<dbReference type="PhylomeDB" id="Q91XL3"/>
<dbReference type="TreeFam" id="TF105736"/>
<dbReference type="Reactome" id="R-MMU-173599">
    <property type="pathway name" value="Formation of the active cofactor, UDP-glucuronate"/>
</dbReference>
<dbReference type="Reactome" id="R-MMU-1971475">
    <property type="pathway name" value="A tetrasaccharide linker sequence is required for GAG synthesis"/>
</dbReference>
<dbReference type="UniPathway" id="UPA00796">
    <property type="reaction ID" value="UER00771"/>
</dbReference>
<dbReference type="BioGRID-ORCS" id="67883">
    <property type="hits" value="13 hits in 76 CRISPR screens"/>
</dbReference>
<dbReference type="ChiTaRS" id="Uxs1">
    <property type="organism name" value="mouse"/>
</dbReference>
<dbReference type="PRO" id="PR:Q91XL3"/>
<dbReference type="Proteomes" id="UP000000589">
    <property type="component" value="Chromosome 1"/>
</dbReference>
<dbReference type="RNAct" id="Q91XL3">
    <property type="molecule type" value="protein"/>
</dbReference>
<dbReference type="Bgee" id="ENSMUSG00000057363">
    <property type="expression patterns" value="Expressed in indifferent gonad and 253 other cell types or tissues"/>
</dbReference>
<dbReference type="ExpressionAtlas" id="Q91XL3">
    <property type="expression patterns" value="baseline and differential"/>
</dbReference>
<dbReference type="GO" id="GO:1902494">
    <property type="term" value="C:catalytic complex"/>
    <property type="evidence" value="ECO:0007669"/>
    <property type="project" value="Ensembl"/>
</dbReference>
<dbReference type="GO" id="GO:0005794">
    <property type="term" value="C:Golgi apparatus"/>
    <property type="evidence" value="ECO:0000266"/>
    <property type="project" value="MGI"/>
</dbReference>
<dbReference type="GO" id="GO:0032580">
    <property type="term" value="C:Golgi cisterna membrane"/>
    <property type="evidence" value="ECO:0007669"/>
    <property type="project" value="UniProtKB-SubCell"/>
</dbReference>
<dbReference type="GO" id="GO:0005796">
    <property type="term" value="C:Golgi lumen"/>
    <property type="evidence" value="ECO:0000266"/>
    <property type="project" value="MGI"/>
</dbReference>
<dbReference type="GO" id="GO:0005739">
    <property type="term" value="C:mitochondrion"/>
    <property type="evidence" value="ECO:0007005"/>
    <property type="project" value="MGI"/>
</dbReference>
<dbReference type="GO" id="GO:0070403">
    <property type="term" value="F:NAD+ binding"/>
    <property type="evidence" value="ECO:0007669"/>
    <property type="project" value="Ensembl"/>
</dbReference>
<dbReference type="GO" id="GO:0042803">
    <property type="term" value="F:protein homodimerization activity"/>
    <property type="evidence" value="ECO:0007669"/>
    <property type="project" value="Ensembl"/>
</dbReference>
<dbReference type="GO" id="GO:0048040">
    <property type="term" value="F:UDP-glucuronate decarboxylase activity"/>
    <property type="evidence" value="ECO:0000266"/>
    <property type="project" value="MGI"/>
</dbReference>
<dbReference type="GO" id="GO:0042732">
    <property type="term" value="P:D-xylose metabolic process"/>
    <property type="evidence" value="ECO:0007669"/>
    <property type="project" value="InterPro"/>
</dbReference>
<dbReference type="GO" id="GO:0033320">
    <property type="term" value="P:UDP-D-xylose biosynthetic process"/>
    <property type="evidence" value="ECO:0000266"/>
    <property type="project" value="MGI"/>
</dbReference>
<dbReference type="CDD" id="cd05230">
    <property type="entry name" value="UGD_SDR_e"/>
    <property type="match status" value="1"/>
</dbReference>
<dbReference type="FunFam" id="3.40.50.720:FF:000065">
    <property type="entry name" value="UDP-glucuronic acid decarboxylase 1"/>
    <property type="match status" value="1"/>
</dbReference>
<dbReference type="Gene3D" id="3.40.50.720">
    <property type="entry name" value="NAD(P)-binding Rossmann-like Domain"/>
    <property type="match status" value="2"/>
</dbReference>
<dbReference type="InterPro" id="IPR016040">
    <property type="entry name" value="NAD(P)-bd_dom"/>
</dbReference>
<dbReference type="InterPro" id="IPR036291">
    <property type="entry name" value="NAD(P)-bd_dom_sf"/>
</dbReference>
<dbReference type="InterPro" id="IPR044516">
    <property type="entry name" value="UXS-like"/>
</dbReference>
<dbReference type="InterPro" id="IPR021761">
    <property type="entry name" value="UXS1_N"/>
</dbReference>
<dbReference type="PANTHER" id="PTHR43078:SF6">
    <property type="entry name" value="UDP-GLUCURONIC ACID DECARBOXYLASE 1"/>
    <property type="match status" value="1"/>
</dbReference>
<dbReference type="PANTHER" id="PTHR43078">
    <property type="entry name" value="UDP-GLUCURONIC ACID DECARBOXYLASE-RELATED"/>
    <property type="match status" value="1"/>
</dbReference>
<dbReference type="Pfam" id="PF16363">
    <property type="entry name" value="GDP_Man_Dehyd"/>
    <property type="match status" value="1"/>
</dbReference>
<dbReference type="Pfam" id="PF11803">
    <property type="entry name" value="UXS1_N"/>
    <property type="match status" value="1"/>
</dbReference>
<dbReference type="SUPFAM" id="SSF51735">
    <property type="entry name" value="NAD(P)-binding Rossmann-fold domains"/>
    <property type="match status" value="1"/>
</dbReference>
<accession>Q91XL3</accession>
<accession>Q3U854</accession>
<reference key="1">
    <citation type="submission" date="2001-07" db="EMBL/GenBank/DDBJ databases">
        <title>UDP-glucuronic acid decarboxylase, the first committed step in glycosaminoglycan synthesis.</title>
        <authorList>
            <person name="Olson S.K."/>
            <person name="Esko J.D."/>
        </authorList>
    </citation>
    <scope>NUCLEOTIDE SEQUENCE [MRNA]</scope>
    <source>
        <strain>LAF1</strain>
        <tissue>Mastocytoma</tissue>
    </source>
</reference>
<reference key="2">
    <citation type="journal article" date="2005" name="Science">
        <title>The transcriptional landscape of the mammalian genome.</title>
        <authorList>
            <person name="Carninci P."/>
            <person name="Kasukawa T."/>
            <person name="Katayama S."/>
            <person name="Gough J."/>
            <person name="Frith M.C."/>
            <person name="Maeda N."/>
            <person name="Oyama R."/>
            <person name="Ravasi T."/>
            <person name="Lenhard B."/>
            <person name="Wells C."/>
            <person name="Kodzius R."/>
            <person name="Shimokawa K."/>
            <person name="Bajic V.B."/>
            <person name="Brenner S.E."/>
            <person name="Batalov S."/>
            <person name="Forrest A.R."/>
            <person name="Zavolan M."/>
            <person name="Davis M.J."/>
            <person name="Wilming L.G."/>
            <person name="Aidinis V."/>
            <person name="Allen J.E."/>
            <person name="Ambesi-Impiombato A."/>
            <person name="Apweiler R."/>
            <person name="Aturaliya R.N."/>
            <person name="Bailey T.L."/>
            <person name="Bansal M."/>
            <person name="Baxter L."/>
            <person name="Beisel K.W."/>
            <person name="Bersano T."/>
            <person name="Bono H."/>
            <person name="Chalk A.M."/>
            <person name="Chiu K.P."/>
            <person name="Choudhary V."/>
            <person name="Christoffels A."/>
            <person name="Clutterbuck D.R."/>
            <person name="Crowe M.L."/>
            <person name="Dalla E."/>
            <person name="Dalrymple B.P."/>
            <person name="de Bono B."/>
            <person name="Della Gatta G."/>
            <person name="di Bernardo D."/>
            <person name="Down T."/>
            <person name="Engstrom P."/>
            <person name="Fagiolini M."/>
            <person name="Faulkner G."/>
            <person name="Fletcher C.F."/>
            <person name="Fukushima T."/>
            <person name="Furuno M."/>
            <person name="Futaki S."/>
            <person name="Gariboldi M."/>
            <person name="Georgii-Hemming P."/>
            <person name="Gingeras T.R."/>
            <person name="Gojobori T."/>
            <person name="Green R.E."/>
            <person name="Gustincich S."/>
            <person name="Harbers M."/>
            <person name="Hayashi Y."/>
            <person name="Hensch T.K."/>
            <person name="Hirokawa N."/>
            <person name="Hill D."/>
            <person name="Huminiecki L."/>
            <person name="Iacono M."/>
            <person name="Ikeo K."/>
            <person name="Iwama A."/>
            <person name="Ishikawa T."/>
            <person name="Jakt M."/>
            <person name="Kanapin A."/>
            <person name="Katoh M."/>
            <person name="Kawasawa Y."/>
            <person name="Kelso J."/>
            <person name="Kitamura H."/>
            <person name="Kitano H."/>
            <person name="Kollias G."/>
            <person name="Krishnan S.P."/>
            <person name="Kruger A."/>
            <person name="Kummerfeld S.K."/>
            <person name="Kurochkin I.V."/>
            <person name="Lareau L.F."/>
            <person name="Lazarevic D."/>
            <person name="Lipovich L."/>
            <person name="Liu J."/>
            <person name="Liuni S."/>
            <person name="McWilliam S."/>
            <person name="Madan Babu M."/>
            <person name="Madera M."/>
            <person name="Marchionni L."/>
            <person name="Matsuda H."/>
            <person name="Matsuzawa S."/>
            <person name="Miki H."/>
            <person name="Mignone F."/>
            <person name="Miyake S."/>
            <person name="Morris K."/>
            <person name="Mottagui-Tabar S."/>
            <person name="Mulder N."/>
            <person name="Nakano N."/>
            <person name="Nakauchi H."/>
            <person name="Ng P."/>
            <person name="Nilsson R."/>
            <person name="Nishiguchi S."/>
            <person name="Nishikawa S."/>
            <person name="Nori F."/>
            <person name="Ohara O."/>
            <person name="Okazaki Y."/>
            <person name="Orlando V."/>
            <person name="Pang K.C."/>
            <person name="Pavan W.J."/>
            <person name="Pavesi G."/>
            <person name="Pesole G."/>
            <person name="Petrovsky N."/>
            <person name="Piazza S."/>
            <person name="Reed J."/>
            <person name="Reid J.F."/>
            <person name="Ring B.Z."/>
            <person name="Ringwald M."/>
            <person name="Rost B."/>
            <person name="Ruan Y."/>
            <person name="Salzberg S.L."/>
            <person name="Sandelin A."/>
            <person name="Schneider C."/>
            <person name="Schoenbach C."/>
            <person name="Sekiguchi K."/>
            <person name="Semple C.A."/>
            <person name="Seno S."/>
            <person name="Sessa L."/>
            <person name="Sheng Y."/>
            <person name="Shibata Y."/>
            <person name="Shimada H."/>
            <person name="Shimada K."/>
            <person name="Silva D."/>
            <person name="Sinclair B."/>
            <person name="Sperling S."/>
            <person name="Stupka E."/>
            <person name="Sugiura K."/>
            <person name="Sultana R."/>
            <person name="Takenaka Y."/>
            <person name="Taki K."/>
            <person name="Tammoja K."/>
            <person name="Tan S.L."/>
            <person name="Tang S."/>
            <person name="Taylor M.S."/>
            <person name="Tegner J."/>
            <person name="Teichmann S.A."/>
            <person name="Ueda H.R."/>
            <person name="van Nimwegen E."/>
            <person name="Verardo R."/>
            <person name="Wei C.L."/>
            <person name="Yagi K."/>
            <person name="Yamanishi H."/>
            <person name="Zabarovsky E."/>
            <person name="Zhu S."/>
            <person name="Zimmer A."/>
            <person name="Hide W."/>
            <person name="Bult C."/>
            <person name="Grimmond S.M."/>
            <person name="Teasdale R.D."/>
            <person name="Liu E.T."/>
            <person name="Brusic V."/>
            <person name="Quackenbush J."/>
            <person name="Wahlestedt C."/>
            <person name="Mattick J.S."/>
            <person name="Hume D.A."/>
            <person name="Kai C."/>
            <person name="Sasaki D."/>
            <person name="Tomaru Y."/>
            <person name="Fukuda S."/>
            <person name="Kanamori-Katayama M."/>
            <person name="Suzuki M."/>
            <person name="Aoki J."/>
            <person name="Arakawa T."/>
            <person name="Iida J."/>
            <person name="Imamura K."/>
            <person name="Itoh M."/>
            <person name="Kato T."/>
            <person name="Kawaji H."/>
            <person name="Kawagashira N."/>
            <person name="Kawashima T."/>
            <person name="Kojima M."/>
            <person name="Kondo S."/>
            <person name="Konno H."/>
            <person name="Nakano K."/>
            <person name="Ninomiya N."/>
            <person name="Nishio T."/>
            <person name="Okada M."/>
            <person name="Plessy C."/>
            <person name="Shibata K."/>
            <person name="Shiraki T."/>
            <person name="Suzuki S."/>
            <person name="Tagami M."/>
            <person name="Waki K."/>
            <person name="Watahiki A."/>
            <person name="Okamura-Oho Y."/>
            <person name="Suzuki H."/>
            <person name="Kawai J."/>
            <person name="Hayashizaki Y."/>
        </authorList>
    </citation>
    <scope>NUCLEOTIDE SEQUENCE [LARGE SCALE MRNA]</scope>
    <source>
        <strain>C57BL/6J</strain>
        <tissue>Bone marrow macrophage</tissue>
        <tissue>Pancreas</tissue>
    </source>
</reference>
<reference key="3">
    <citation type="journal article" date="2004" name="Genome Res.">
        <title>The status, quality, and expansion of the NIH full-length cDNA project: the Mammalian Gene Collection (MGC).</title>
        <authorList>
            <consortium name="The MGC Project Team"/>
        </authorList>
    </citation>
    <scope>NUCLEOTIDE SEQUENCE [LARGE SCALE MRNA]</scope>
    <source>
        <strain>FVB/N</strain>
        <tissue>Mammary tumor</tissue>
    </source>
</reference>
<reference key="4">
    <citation type="journal article" date="2010" name="Cell">
        <title>A tissue-specific atlas of mouse protein phosphorylation and expression.</title>
        <authorList>
            <person name="Huttlin E.L."/>
            <person name="Jedrychowski M.P."/>
            <person name="Elias J.E."/>
            <person name="Goswami T."/>
            <person name="Rad R."/>
            <person name="Beausoleil S.A."/>
            <person name="Villen J."/>
            <person name="Haas W."/>
            <person name="Sowa M.E."/>
            <person name="Gygi S.P."/>
        </authorList>
    </citation>
    <scope>IDENTIFICATION BY MASS SPECTROMETRY [LARGE SCALE ANALYSIS]</scope>
    <source>
        <tissue>Testis</tissue>
    </source>
</reference>
<keyword id="KW-0007">Acetylation</keyword>
<keyword id="KW-0210">Decarboxylase</keyword>
<keyword id="KW-0325">Glycoprotein</keyword>
<keyword id="KW-0333">Golgi apparatus</keyword>
<keyword id="KW-0456">Lyase</keyword>
<keyword id="KW-0472">Membrane</keyword>
<keyword id="KW-0520">NAD</keyword>
<keyword id="KW-0597">Phosphoprotein</keyword>
<keyword id="KW-1185">Reference proteome</keyword>
<keyword id="KW-0735">Signal-anchor</keyword>
<keyword id="KW-0812">Transmembrane</keyword>
<keyword id="KW-1133">Transmembrane helix</keyword>
<sequence>MVSKGLLRLVSSVNRRRMKLLLGIALFAYAASVWGNFVNMRSIQENGELKIESKIEEIVEPLREKIRDLEKSFTQKYPPVKFLSEKDRKRILITGGAGFVGSHLTDKLMMDGHEVTVVDNFFTGRKRNVEHWIGHENFELINHDVVEPLYIEVDQIYHLASPASPPNYMYNPIKTLKTNTIGTLNMLGLAKRVGARLLLASTSEVYGDPEVHPQSEDYWGHVNPIGPRACYDEGKRVAETMCYAYMKQEGVEVRVARIFNTFGPRMHMNDGRVVSNFILQALQGEPLTVYGSGSQTRAFQYVSDLVNGLVALMNSNVSSPVNLGNPEEHTILEFAQLIKNLVGSGSEIQFLSEAQDDPQKRKPDIKKAKLMLGWEPVVPLEEGLNKAIHYFRKELEYQANNQYIPKPKPARVKKGRTRHS</sequence>
<evidence type="ECO:0000250" key="1">
    <source>
        <dbReference type="UniProtKB" id="Q5PQX0"/>
    </source>
</evidence>
<evidence type="ECO:0000250" key="2">
    <source>
        <dbReference type="UniProtKB" id="Q8NBZ7"/>
    </source>
</evidence>
<evidence type="ECO:0000255" key="3"/>
<evidence type="ECO:0000305" key="4"/>
<protein>
    <recommendedName>
        <fullName evidence="4">UDP-glucuronic acid decarboxylase 1</fullName>
        <ecNumber evidence="2">4.1.1.35</ecNumber>
    </recommendedName>
    <alternativeName>
        <fullName>UDP-glucuronate decarboxylase 1</fullName>
        <shortName>UGD</shortName>
        <shortName>UXS-1</shortName>
    </alternativeName>
</protein>